<accession>Q7TQA5</accession>
<feature type="chain" id="PRO_0000082286" description="Taste receptor type 2 member 39">
    <location>
        <begin position="1"/>
        <end position="319"/>
    </location>
</feature>
<feature type="topological domain" description="Extracellular" evidence="1">
    <location>
        <begin position="1"/>
        <end position="16"/>
    </location>
</feature>
<feature type="transmembrane region" description="Helical; Name=1" evidence="1">
    <location>
        <begin position="17"/>
        <end position="37"/>
    </location>
</feature>
<feature type="topological domain" description="Cytoplasmic" evidence="1">
    <location>
        <begin position="38"/>
        <end position="65"/>
    </location>
</feature>
<feature type="transmembrane region" description="Helical; Name=2" evidence="1">
    <location>
        <begin position="66"/>
        <end position="86"/>
    </location>
</feature>
<feature type="topological domain" description="Extracellular" evidence="1">
    <location>
        <begin position="87"/>
        <end position="97"/>
    </location>
</feature>
<feature type="transmembrane region" description="Helical; Name=3" evidence="1">
    <location>
        <begin position="98"/>
        <end position="118"/>
    </location>
</feature>
<feature type="topological domain" description="Cytoplasmic" evidence="1">
    <location>
        <begin position="119"/>
        <end position="137"/>
    </location>
</feature>
<feature type="transmembrane region" description="Helical; Name=4" evidence="1">
    <location>
        <begin position="138"/>
        <end position="158"/>
    </location>
</feature>
<feature type="topological domain" description="Extracellular" evidence="1">
    <location>
        <begin position="159"/>
        <end position="194"/>
    </location>
</feature>
<feature type="transmembrane region" description="Helical; Name=5" evidence="1">
    <location>
        <begin position="195"/>
        <end position="215"/>
    </location>
</feature>
<feature type="topological domain" description="Cytoplasmic" evidence="1">
    <location>
        <begin position="216"/>
        <end position="247"/>
    </location>
</feature>
<feature type="transmembrane region" description="Helical; Name=6" evidence="1">
    <location>
        <begin position="248"/>
        <end position="268"/>
    </location>
</feature>
<feature type="topological domain" description="Extracellular" evidence="1">
    <location>
        <begin position="269"/>
        <end position="273"/>
    </location>
</feature>
<feature type="transmembrane region" description="Helical; Name=7" evidence="1">
    <location>
        <begin position="274"/>
        <end position="294"/>
    </location>
</feature>
<feature type="topological domain" description="Cytoplasmic" evidence="1">
    <location>
        <begin position="295"/>
        <end position="319"/>
    </location>
</feature>
<feature type="glycosylation site" description="N-linked (GlcNAc...) asparagine" evidence="1">
    <location>
        <position position="95"/>
    </location>
</feature>
<feature type="glycosylation site" description="N-linked (GlcNAc...) asparagine" evidence="1">
    <location>
        <position position="167"/>
    </location>
</feature>
<feature type="glycosylation site" description="N-linked (GlcNAc...) asparagine" evidence="1">
    <location>
        <position position="176"/>
    </location>
</feature>
<feature type="glycosylation site" description="N-linked (GlcNAc...) asparagine" evidence="1">
    <location>
        <position position="190"/>
    </location>
</feature>
<name>T2R39_MOUSE</name>
<comment type="function">
    <text evidence="2">Putative taste receptor which may play a role in the perception of bitterness.</text>
</comment>
<comment type="subcellular location">
    <subcellularLocation>
        <location>Membrane</location>
        <topology>Multi-pass membrane protein</topology>
    </subcellularLocation>
</comment>
<comment type="miscellaneous">
    <text>Several bitter taste receptors are expressed in a single taste receptor cell.</text>
</comment>
<comment type="similarity">
    <text evidence="3">Belongs to the G-protein coupled receptor T2R family.</text>
</comment>
<gene>
    <name type="primary">Tas2r39</name>
    <name type="synonym">T2r34</name>
    <name type="synonym">Tas2r139</name>
</gene>
<evidence type="ECO:0000255" key="1"/>
<evidence type="ECO:0000303" key="2">
    <source>
    </source>
</evidence>
<evidence type="ECO:0000305" key="3"/>
<evidence type="ECO:0000312" key="4">
    <source>
        <dbReference type="EMBL" id="AAP40340.1"/>
    </source>
</evidence>
<dbReference type="EMBL" id="AF532790">
    <property type="protein sequence ID" value="AAP40340.1"/>
    <property type="molecule type" value="Genomic_DNA"/>
</dbReference>
<dbReference type="EMBL" id="AC157218">
    <property type="status" value="NOT_ANNOTATED_CDS"/>
    <property type="molecule type" value="Genomic_DNA"/>
</dbReference>
<dbReference type="EMBL" id="BK001094">
    <property type="protein sequence ID" value="DAA01233.1"/>
    <property type="molecule type" value="Genomic_DNA"/>
</dbReference>
<dbReference type="CCDS" id="CCDS20061.1"/>
<dbReference type="RefSeq" id="NP_851792.1">
    <property type="nucleotide sequence ID" value="NM_181275.1"/>
</dbReference>
<dbReference type="SMR" id="Q7TQA5"/>
<dbReference type="FunCoup" id="Q7TQA5">
    <property type="interactions" value="558"/>
</dbReference>
<dbReference type="STRING" id="10090.ENSMUSP00000062919"/>
<dbReference type="GlyCosmos" id="Q7TQA5">
    <property type="glycosylation" value="4 sites, No reported glycans"/>
</dbReference>
<dbReference type="GlyGen" id="Q7TQA5">
    <property type="glycosylation" value="4 sites"/>
</dbReference>
<dbReference type="iPTMnet" id="Q7TQA5"/>
<dbReference type="PhosphoSitePlus" id="Q7TQA5"/>
<dbReference type="PaxDb" id="10090-ENSMUSP00000062919"/>
<dbReference type="Antibodypedia" id="57990">
    <property type="antibodies" value="52 antibodies from 17 providers"/>
</dbReference>
<dbReference type="DNASU" id="353148"/>
<dbReference type="Ensembl" id="ENSMUST00000057686.5">
    <property type="protein sequence ID" value="ENSMUSP00000062919.5"/>
    <property type="gene ID" value="ENSMUSG00000047102.5"/>
</dbReference>
<dbReference type="GeneID" id="353148"/>
<dbReference type="KEGG" id="mmu:353148"/>
<dbReference type="UCSC" id="uc009bqm.1">
    <property type="organism name" value="mouse"/>
</dbReference>
<dbReference type="AGR" id="MGI:2681308"/>
<dbReference type="CTD" id="353148"/>
<dbReference type="MGI" id="MGI:2681308">
    <property type="gene designation" value="Tas2r139"/>
</dbReference>
<dbReference type="VEuPathDB" id="HostDB:ENSMUSG00000047102"/>
<dbReference type="eggNOG" id="ENOG502SQHF">
    <property type="taxonomic scope" value="Eukaryota"/>
</dbReference>
<dbReference type="GeneTree" id="ENSGT01100000263477"/>
<dbReference type="HOGENOM" id="CLU_072337_3_0_1"/>
<dbReference type="InParanoid" id="Q7TQA5"/>
<dbReference type="OMA" id="LYMSNIF"/>
<dbReference type="OrthoDB" id="8876749at2759"/>
<dbReference type="PhylomeDB" id="Q7TQA5"/>
<dbReference type="TreeFam" id="TF335891"/>
<dbReference type="Reactome" id="R-MMU-418594">
    <property type="pathway name" value="G alpha (i) signalling events"/>
</dbReference>
<dbReference type="Reactome" id="R-MMU-420499">
    <property type="pathway name" value="Class C/3 (Metabotropic glutamate/pheromone receptors)"/>
</dbReference>
<dbReference type="Reactome" id="R-MMU-9717207">
    <property type="pathway name" value="Sensory perception of sweet, bitter, and umami (glutamate) taste"/>
</dbReference>
<dbReference type="BioGRID-ORCS" id="353148">
    <property type="hits" value="0 hits in 76 CRISPR screens"/>
</dbReference>
<dbReference type="PRO" id="PR:Q7TQA5"/>
<dbReference type="Proteomes" id="UP000000589">
    <property type="component" value="Chromosome 6"/>
</dbReference>
<dbReference type="RNAct" id="Q7TQA5">
    <property type="molecule type" value="protein"/>
</dbReference>
<dbReference type="Bgee" id="ENSMUSG00000047102">
    <property type="expression patterns" value="Expressed in epiblast cell in embryo"/>
</dbReference>
<dbReference type="GO" id="GO:0016020">
    <property type="term" value="C:membrane"/>
    <property type="evidence" value="ECO:0000303"/>
    <property type="project" value="UniProtKB"/>
</dbReference>
<dbReference type="GO" id="GO:0033038">
    <property type="term" value="F:bitter taste receptor activity"/>
    <property type="evidence" value="ECO:0007669"/>
    <property type="project" value="Ensembl"/>
</dbReference>
<dbReference type="GO" id="GO:0004930">
    <property type="term" value="F:G protein-coupled receptor activity"/>
    <property type="evidence" value="ECO:0007669"/>
    <property type="project" value="UniProtKB-KW"/>
</dbReference>
<dbReference type="GO" id="GO:0008527">
    <property type="term" value="F:taste receptor activity"/>
    <property type="evidence" value="ECO:0000303"/>
    <property type="project" value="UniProtKB"/>
</dbReference>
<dbReference type="GO" id="GO:0001580">
    <property type="term" value="P:detection of chemical stimulus involved in sensory perception of bitter taste"/>
    <property type="evidence" value="ECO:0000303"/>
    <property type="project" value="UniProtKB"/>
</dbReference>
<dbReference type="FunFam" id="1.20.1070.10:FF:000055">
    <property type="entry name" value="Taste receptor type 2"/>
    <property type="match status" value="1"/>
</dbReference>
<dbReference type="Gene3D" id="1.20.1070.10">
    <property type="entry name" value="Rhodopsin 7-helix transmembrane proteins"/>
    <property type="match status" value="1"/>
</dbReference>
<dbReference type="InterPro" id="IPR017452">
    <property type="entry name" value="GPCR_Rhodpsn_7TM"/>
</dbReference>
<dbReference type="InterPro" id="IPR007960">
    <property type="entry name" value="TAS2R"/>
</dbReference>
<dbReference type="PANTHER" id="PTHR11394">
    <property type="entry name" value="TASTE RECEPTOR TYPE 2"/>
    <property type="match status" value="1"/>
</dbReference>
<dbReference type="PANTHER" id="PTHR11394:SF142">
    <property type="entry name" value="TASTE RECEPTOR TYPE 2 MEMBER 39"/>
    <property type="match status" value="1"/>
</dbReference>
<dbReference type="Pfam" id="PF05296">
    <property type="entry name" value="TAS2R"/>
    <property type="match status" value="1"/>
</dbReference>
<dbReference type="SUPFAM" id="SSF81321">
    <property type="entry name" value="Family A G protein-coupled receptor-like"/>
    <property type="match status" value="1"/>
</dbReference>
<dbReference type="PROSITE" id="PS50262">
    <property type="entry name" value="G_PROTEIN_RECEP_F1_2"/>
    <property type="match status" value="1"/>
</dbReference>
<organism evidence="4">
    <name type="scientific">Mus musculus</name>
    <name type="common">Mouse</name>
    <dbReference type="NCBI Taxonomy" id="10090"/>
    <lineage>
        <taxon>Eukaryota</taxon>
        <taxon>Metazoa</taxon>
        <taxon>Chordata</taxon>
        <taxon>Craniata</taxon>
        <taxon>Vertebrata</taxon>
        <taxon>Euteleostomi</taxon>
        <taxon>Mammalia</taxon>
        <taxon>Eutheria</taxon>
        <taxon>Euarchontoglires</taxon>
        <taxon>Glires</taxon>
        <taxon>Rodentia</taxon>
        <taxon>Myomorpha</taxon>
        <taxon>Muroidea</taxon>
        <taxon>Muridae</taxon>
        <taxon>Murinae</taxon>
        <taxon>Mus</taxon>
        <taxon>Mus</taxon>
    </lineage>
</organism>
<proteinExistence type="inferred from homology"/>
<keyword id="KW-0297">G-protein coupled receptor</keyword>
<keyword id="KW-0325">Glycoprotein</keyword>
<keyword id="KW-0472">Membrane</keyword>
<keyword id="KW-0675">Receptor</keyword>
<keyword id="KW-1185">Reference proteome</keyword>
<keyword id="KW-0716">Sensory transduction</keyword>
<keyword id="KW-0919">Taste</keyword>
<keyword id="KW-0807">Transducer</keyword>
<keyword id="KW-0812">Transmembrane</keyword>
<keyword id="KW-1133">Transmembrane helix</keyword>
<reference evidence="4" key="1">
    <citation type="journal article" date="2003" name="Physiol. Genomics">
        <title>Evolutionary relationships of the Tas2r receptor gene families in mouse and human.</title>
        <authorList>
            <person name="Conte C."/>
            <person name="Ebeling M."/>
            <person name="Marcuz A."/>
            <person name="Nef P."/>
            <person name="Andres-Barquin P.J."/>
        </authorList>
    </citation>
    <scope>NUCLEOTIDE SEQUENCE [GENOMIC DNA]</scope>
    <source>
        <strain evidence="4">C57BL/6J</strain>
    </source>
</reference>
<reference key="2">
    <citation type="journal article" date="2009" name="PLoS Biol.">
        <title>Lineage-specific biology revealed by a finished genome assembly of the mouse.</title>
        <authorList>
            <person name="Church D.M."/>
            <person name="Goodstadt L."/>
            <person name="Hillier L.W."/>
            <person name="Zody M.C."/>
            <person name="Goldstein S."/>
            <person name="She X."/>
            <person name="Bult C.J."/>
            <person name="Agarwala R."/>
            <person name="Cherry J.L."/>
            <person name="DiCuccio M."/>
            <person name="Hlavina W."/>
            <person name="Kapustin Y."/>
            <person name="Meric P."/>
            <person name="Maglott D."/>
            <person name="Birtle Z."/>
            <person name="Marques A.C."/>
            <person name="Graves T."/>
            <person name="Zhou S."/>
            <person name="Teague B."/>
            <person name="Potamousis K."/>
            <person name="Churas C."/>
            <person name="Place M."/>
            <person name="Herschleb J."/>
            <person name="Runnheim R."/>
            <person name="Forrest D."/>
            <person name="Amos-Landgraf J."/>
            <person name="Schwartz D.C."/>
            <person name="Cheng Z."/>
            <person name="Lindblad-Toh K."/>
            <person name="Eichler E.E."/>
            <person name="Ponting C.P."/>
        </authorList>
    </citation>
    <scope>NUCLEOTIDE SEQUENCE [LARGE SCALE GENOMIC DNA]</scope>
    <source>
        <strain>C57BL/6J</strain>
    </source>
</reference>
<reference evidence="3" key="3">
    <citation type="journal article" date="2003" name="Mol. Biol. Evol.">
        <title>Adaptive diversification of bitter taste receptor genes in mammalian evolution.</title>
        <authorList>
            <person name="Shi P."/>
            <person name="Zhang J."/>
            <person name="Yang H."/>
            <person name="Zhang Y.-P."/>
        </authorList>
    </citation>
    <scope>IDENTIFICATION</scope>
</reference>
<sequence length="319" mass="36308">MAQPSNYWKQDVLPLSILMLTLVATECTIGIIASGIVMAVNAVSWVQKKAISITTRILLLLSVSRIGLQSIMLIEITSSIFNVAFYNSVLYRVSNVSFVFLNYCSLWFAALLSFFHFVKIANFSYPLFFKLKWRISELMPWLLWLSVFISFSSSMFFSKHKFTVNNNNSLSNNICNFTMKLYVVETNVVNVSFLFISGILPPLTMFVATATLLIFSLRRHTLNMRNSATGSRNPCIEAHMQAIKETSCFLFLYILNAAALLLSTSNIVDASLFWSIVIRIVLPVYPAGHSVLLIQNNPGLRRTWKHLQSQIHLYLQNRF</sequence>
<protein>
    <recommendedName>
        <fullName>Taste receptor type 2 member 39</fullName>
        <shortName>T2R39</shortName>
        <shortName>mT2R34</shortName>
    </recommendedName>
</protein>